<gene>
    <name type="primary">Samd14</name>
</gene>
<organism>
    <name type="scientific">Mus musculus</name>
    <name type="common">Mouse</name>
    <dbReference type="NCBI Taxonomy" id="10090"/>
    <lineage>
        <taxon>Eukaryota</taxon>
        <taxon>Metazoa</taxon>
        <taxon>Chordata</taxon>
        <taxon>Craniata</taxon>
        <taxon>Vertebrata</taxon>
        <taxon>Euteleostomi</taxon>
        <taxon>Mammalia</taxon>
        <taxon>Eutheria</taxon>
        <taxon>Euarchontoglires</taxon>
        <taxon>Glires</taxon>
        <taxon>Rodentia</taxon>
        <taxon>Myomorpha</taxon>
        <taxon>Muroidea</taxon>
        <taxon>Muridae</taxon>
        <taxon>Murinae</taxon>
        <taxon>Mus</taxon>
        <taxon>Mus</taxon>
    </lineage>
</organism>
<evidence type="ECO:0000250" key="1">
    <source>
        <dbReference type="UniProtKB" id="Q5BJU3"/>
    </source>
</evidence>
<evidence type="ECO:0000255" key="2"/>
<evidence type="ECO:0000255" key="3">
    <source>
        <dbReference type="PROSITE-ProRule" id="PRU00184"/>
    </source>
</evidence>
<evidence type="ECO:0000256" key="4">
    <source>
        <dbReference type="SAM" id="MobiDB-lite"/>
    </source>
</evidence>
<evidence type="ECO:0000305" key="5"/>
<evidence type="ECO:0007744" key="6">
    <source>
    </source>
</evidence>
<evidence type="ECO:0007744" key="7">
    <source>
    </source>
</evidence>
<comment type="sequence caution" evidence="5">
    <conflict type="frameshift">
        <sequence resource="EMBL-CDS" id="BAC32983"/>
    </conflict>
</comment>
<comment type="sequence caution" evidence="5">
    <conflict type="frameshift">
        <sequence resource="EMBL-CDS" id="BAC33903"/>
    </conflict>
</comment>
<proteinExistence type="evidence at protein level"/>
<protein>
    <recommendedName>
        <fullName>Sterile alpha motif domain-containing protein 14</fullName>
        <shortName>SAM domain-containing protein 14</shortName>
    </recommendedName>
</protein>
<name>SAM14_MOUSE</name>
<accession>Q8K070</accession>
<accession>Q5SWB7</accession>
<accession>Q8BHE2</accession>
<accession>Q8C8N5</accession>
<feature type="chain" id="PRO_0000250564" description="Sterile alpha motif domain-containing protein 14">
    <location>
        <begin position="1"/>
        <end position="417"/>
    </location>
</feature>
<feature type="domain" description="SAM" evidence="3">
    <location>
        <begin position="326"/>
        <end position="389"/>
    </location>
</feature>
<feature type="region of interest" description="Disordered" evidence="4">
    <location>
        <begin position="36"/>
        <end position="302"/>
    </location>
</feature>
<feature type="region of interest" description="Disordered" evidence="4">
    <location>
        <begin position="390"/>
        <end position="417"/>
    </location>
</feature>
<feature type="coiled-coil region" evidence="2">
    <location>
        <begin position="375"/>
        <end position="416"/>
    </location>
</feature>
<feature type="compositionally biased region" description="Basic residues" evidence="4">
    <location>
        <begin position="40"/>
        <end position="49"/>
    </location>
</feature>
<feature type="compositionally biased region" description="Low complexity" evidence="4">
    <location>
        <begin position="138"/>
        <end position="153"/>
    </location>
</feature>
<feature type="compositionally biased region" description="Basic and acidic residues" evidence="4">
    <location>
        <begin position="159"/>
        <end position="173"/>
    </location>
</feature>
<feature type="compositionally biased region" description="Low complexity" evidence="4">
    <location>
        <begin position="244"/>
        <end position="260"/>
    </location>
</feature>
<feature type="compositionally biased region" description="Low complexity" evidence="4">
    <location>
        <begin position="276"/>
        <end position="289"/>
    </location>
</feature>
<feature type="modified residue" description="Phosphoserine" evidence="7">
    <location>
        <position position="84"/>
    </location>
</feature>
<feature type="modified residue" description="Phosphoserine" evidence="7">
    <location>
        <position position="108"/>
    </location>
</feature>
<feature type="modified residue" description="Phosphoserine" evidence="6">
    <location>
        <position position="173"/>
    </location>
</feature>
<feature type="modified residue" description="Phosphoserine" evidence="1">
    <location>
        <position position="179"/>
    </location>
</feature>
<feature type="modified residue" description="Phosphoserine" evidence="7">
    <location>
        <position position="279"/>
    </location>
</feature>
<feature type="modified residue" description="Phosphothreonine" evidence="7">
    <location>
        <position position="283"/>
    </location>
</feature>
<feature type="sequence conflict" description="In Ref. 1; BAC33903." evidence="5" ref="1">
    <original>D</original>
    <variation>H</variation>
    <location>
        <position position="17"/>
    </location>
</feature>
<feature type="sequence conflict" description="In Ref. 1; BAC32075." evidence="5" ref="1">
    <original>E</original>
    <variation>K</variation>
    <location>
        <position position="113"/>
    </location>
</feature>
<dbReference type="EMBL" id="AK044765">
    <property type="protein sequence ID" value="BAC32075.1"/>
    <property type="molecule type" value="mRNA"/>
</dbReference>
<dbReference type="EMBL" id="AK047184">
    <property type="protein sequence ID" value="BAC32983.1"/>
    <property type="status" value="ALT_FRAME"/>
    <property type="molecule type" value="mRNA"/>
</dbReference>
<dbReference type="EMBL" id="AK049753">
    <property type="protein sequence ID" value="BAC33903.1"/>
    <property type="status" value="ALT_FRAME"/>
    <property type="molecule type" value="mRNA"/>
</dbReference>
<dbReference type="EMBL" id="AL606480">
    <property type="status" value="NOT_ANNOTATED_CDS"/>
    <property type="molecule type" value="Genomic_DNA"/>
</dbReference>
<dbReference type="EMBL" id="BC034054">
    <property type="protein sequence ID" value="AAH34054.1"/>
    <property type="molecule type" value="mRNA"/>
</dbReference>
<dbReference type="EMBL" id="BC049954">
    <property type="protein sequence ID" value="AAH49954.1"/>
    <property type="molecule type" value="mRNA"/>
</dbReference>
<dbReference type="CCDS" id="CCDS25269.1"/>
<dbReference type="RefSeq" id="NP_666137.1">
    <property type="nucleotide sequence ID" value="NM_146025.2"/>
</dbReference>
<dbReference type="SMR" id="Q8K070"/>
<dbReference type="BioGRID" id="229848">
    <property type="interactions" value="1"/>
</dbReference>
<dbReference type="FunCoup" id="Q8K070">
    <property type="interactions" value="206"/>
</dbReference>
<dbReference type="STRING" id="10090.ENSMUSP00000062231"/>
<dbReference type="iPTMnet" id="Q8K070"/>
<dbReference type="PhosphoSitePlus" id="Q8K070"/>
<dbReference type="PaxDb" id="10090-ENSMUSP00000062231"/>
<dbReference type="PeptideAtlas" id="Q8K070"/>
<dbReference type="ProteomicsDB" id="255456"/>
<dbReference type="Antibodypedia" id="30475">
    <property type="antibodies" value="63 antibodies from 16 providers"/>
</dbReference>
<dbReference type="DNASU" id="217125"/>
<dbReference type="Ensembl" id="ENSMUST00000055947.10">
    <property type="protein sequence ID" value="ENSMUSP00000062231.4"/>
    <property type="gene ID" value="ENSMUSG00000047181.13"/>
</dbReference>
<dbReference type="GeneID" id="217125"/>
<dbReference type="KEGG" id="mmu:217125"/>
<dbReference type="UCSC" id="uc007kzt.1">
    <property type="organism name" value="mouse"/>
</dbReference>
<dbReference type="AGR" id="MGI:2384945"/>
<dbReference type="CTD" id="201191"/>
<dbReference type="MGI" id="MGI:2384945">
    <property type="gene designation" value="Samd14"/>
</dbReference>
<dbReference type="VEuPathDB" id="HostDB:ENSMUSG00000047181"/>
<dbReference type="eggNOG" id="KOG1945">
    <property type="taxonomic scope" value="Eukaryota"/>
</dbReference>
<dbReference type="GeneTree" id="ENSGT00940000160279"/>
<dbReference type="HOGENOM" id="CLU_054578_0_0_1"/>
<dbReference type="InParanoid" id="Q8K070"/>
<dbReference type="OMA" id="TANHWTS"/>
<dbReference type="OrthoDB" id="445896at2759"/>
<dbReference type="PhylomeDB" id="Q8K070"/>
<dbReference type="TreeFam" id="TF331870"/>
<dbReference type="BioGRID-ORCS" id="217125">
    <property type="hits" value="4 hits in 79 CRISPR screens"/>
</dbReference>
<dbReference type="ChiTaRS" id="Samd14">
    <property type="organism name" value="mouse"/>
</dbReference>
<dbReference type="PRO" id="PR:Q8K070"/>
<dbReference type="Proteomes" id="UP000000589">
    <property type="component" value="Chromosome 11"/>
</dbReference>
<dbReference type="RNAct" id="Q8K070">
    <property type="molecule type" value="protein"/>
</dbReference>
<dbReference type="Bgee" id="ENSMUSG00000047181">
    <property type="expression patterns" value="Expressed in cortical plate and 218 other cell types or tissues"/>
</dbReference>
<dbReference type="ExpressionAtlas" id="Q8K070">
    <property type="expression patterns" value="baseline and differential"/>
</dbReference>
<dbReference type="CDD" id="cd09512">
    <property type="entry name" value="SAM_Neurabin-like"/>
    <property type="match status" value="1"/>
</dbReference>
<dbReference type="FunFam" id="1.10.150.50:FF:000008">
    <property type="entry name" value="Neurabin-1 isoform 1-like protein"/>
    <property type="match status" value="1"/>
</dbReference>
<dbReference type="Gene3D" id="1.10.150.50">
    <property type="entry name" value="Transcription Factor, Ets-1"/>
    <property type="match status" value="1"/>
</dbReference>
<dbReference type="InterPro" id="IPR043446">
    <property type="entry name" value="Neurabin-like"/>
</dbReference>
<dbReference type="InterPro" id="IPR001660">
    <property type="entry name" value="SAM"/>
</dbReference>
<dbReference type="InterPro" id="IPR013761">
    <property type="entry name" value="SAM/pointed_sf"/>
</dbReference>
<dbReference type="PANTHER" id="PTHR16154">
    <property type="entry name" value="NEURABIN"/>
    <property type="match status" value="1"/>
</dbReference>
<dbReference type="PANTHER" id="PTHR16154:SF28">
    <property type="entry name" value="STERILE ALPHA MOTIF DOMAIN-CONTAINING PROTEIN 14"/>
    <property type="match status" value="1"/>
</dbReference>
<dbReference type="Pfam" id="PF07647">
    <property type="entry name" value="SAM_2"/>
    <property type="match status" value="1"/>
</dbReference>
<dbReference type="SMART" id="SM00454">
    <property type="entry name" value="SAM"/>
    <property type="match status" value="1"/>
</dbReference>
<dbReference type="SUPFAM" id="SSF47769">
    <property type="entry name" value="SAM/Pointed domain"/>
    <property type="match status" value="1"/>
</dbReference>
<dbReference type="PROSITE" id="PS50105">
    <property type="entry name" value="SAM_DOMAIN"/>
    <property type="match status" value="1"/>
</dbReference>
<keyword id="KW-0175">Coiled coil</keyword>
<keyword id="KW-0597">Phosphoprotein</keyword>
<keyword id="KW-1185">Reference proteome</keyword>
<reference key="1">
    <citation type="journal article" date="2005" name="Science">
        <title>The transcriptional landscape of the mammalian genome.</title>
        <authorList>
            <person name="Carninci P."/>
            <person name="Kasukawa T."/>
            <person name="Katayama S."/>
            <person name="Gough J."/>
            <person name="Frith M.C."/>
            <person name="Maeda N."/>
            <person name="Oyama R."/>
            <person name="Ravasi T."/>
            <person name="Lenhard B."/>
            <person name="Wells C."/>
            <person name="Kodzius R."/>
            <person name="Shimokawa K."/>
            <person name="Bajic V.B."/>
            <person name="Brenner S.E."/>
            <person name="Batalov S."/>
            <person name="Forrest A.R."/>
            <person name="Zavolan M."/>
            <person name="Davis M.J."/>
            <person name="Wilming L.G."/>
            <person name="Aidinis V."/>
            <person name="Allen J.E."/>
            <person name="Ambesi-Impiombato A."/>
            <person name="Apweiler R."/>
            <person name="Aturaliya R.N."/>
            <person name="Bailey T.L."/>
            <person name="Bansal M."/>
            <person name="Baxter L."/>
            <person name="Beisel K.W."/>
            <person name="Bersano T."/>
            <person name="Bono H."/>
            <person name="Chalk A.M."/>
            <person name="Chiu K.P."/>
            <person name="Choudhary V."/>
            <person name="Christoffels A."/>
            <person name="Clutterbuck D.R."/>
            <person name="Crowe M.L."/>
            <person name="Dalla E."/>
            <person name="Dalrymple B.P."/>
            <person name="de Bono B."/>
            <person name="Della Gatta G."/>
            <person name="di Bernardo D."/>
            <person name="Down T."/>
            <person name="Engstrom P."/>
            <person name="Fagiolini M."/>
            <person name="Faulkner G."/>
            <person name="Fletcher C.F."/>
            <person name="Fukushima T."/>
            <person name="Furuno M."/>
            <person name="Futaki S."/>
            <person name="Gariboldi M."/>
            <person name="Georgii-Hemming P."/>
            <person name="Gingeras T.R."/>
            <person name="Gojobori T."/>
            <person name="Green R.E."/>
            <person name="Gustincich S."/>
            <person name="Harbers M."/>
            <person name="Hayashi Y."/>
            <person name="Hensch T.K."/>
            <person name="Hirokawa N."/>
            <person name="Hill D."/>
            <person name="Huminiecki L."/>
            <person name="Iacono M."/>
            <person name="Ikeo K."/>
            <person name="Iwama A."/>
            <person name="Ishikawa T."/>
            <person name="Jakt M."/>
            <person name="Kanapin A."/>
            <person name="Katoh M."/>
            <person name="Kawasawa Y."/>
            <person name="Kelso J."/>
            <person name="Kitamura H."/>
            <person name="Kitano H."/>
            <person name="Kollias G."/>
            <person name="Krishnan S.P."/>
            <person name="Kruger A."/>
            <person name="Kummerfeld S.K."/>
            <person name="Kurochkin I.V."/>
            <person name="Lareau L.F."/>
            <person name="Lazarevic D."/>
            <person name="Lipovich L."/>
            <person name="Liu J."/>
            <person name="Liuni S."/>
            <person name="McWilliam S."/>
            <person name="Madan Babu M."/>
            <person name="Madera M."/>
            <person name="Marchionni L."/>
            <person name="Matsuda H."/>
            <person name="Matsuzawa S."/>
            <person name="Miki H."/>
            <person name="Mignone F."/>
            <person name="Miyake S."/>
            <person name="Morris K."/>
            <person name="Mottagui-Tabar S."/>
            <person name="Mulder N."/>
            <person name="Nakano N."/>
            <person name="Nakauchi H."/>
            <person name="Ng P."/>
            <person name="Nilsson R."/>
            <person name="Nishiguchi S."/>
            <person name="Nishikawa S."/>
            <person name="Nori F."/>
            <person name="Ohara O."/>
            <person name="Okazaki Y."/>
            <person name="Orlando V."/>
            <person name="Pang K.C."/>
            <person name="Pavan W.J."/>
            <person name="Pavesi G."/>
            <person name="Pesole G."/>
            <person name="Petrovsky N."/>
            <person name="Piazza S."/>
            <person name="Reed J."/>
            <person name="Reid J.F."/>
            <person name="Ring B.Z."/>
            <person name="Ringwald M."/>
            <person name="Rost B."/>
            <person name="Ruan Y."/>
            <person name="Salzberg S.L."/>
            <person name="Sandelin A."/>
            <person name="Schneider C."/>
            <person name="Schoenbach C."/>
            <person name="Sekiguchi K."/>
            <person name="Semple C.A."/>
            <person name="Seno S."/>
            <person name="Sessa L."/>
            <person name="Sheng Y."/>
            <person name="Shibata Y."/>
            <person name="Shimada H."/>
            <person name="Shimada K."/>
            <person name="Silva D."/>
            <person name="Sinclair B."/>
            <person name="Sperling S."/>
            <person name="Stupka E."/>
            <person name="Sugiura K."/>
            <person name="Sultana R."/>
            <person name="Takenaka Y."/>
            <person name="Taki K."/>
            <person name="Tammoja K."/>
            <person name="Tan S.L."/>
            <person name="Tang S."/>
            <person name="Taylor M.S."/>
            <person name="Tegner J."/>
            <person name="Teichmann S.A."/>
            <person name="Ueda H.R."/>
            <person name="van Nimwegen E."/>
            <person name="Verardo R."/>
            <person name="Wei C.L."/>
            <person name="Yagi K."/>
            <person name="Yamanishi H."/>
            <person name="Zabarovsky E."/>
            <person name="Zhu S."/>
            <person name="Zimmer A."/>
            <person name="Hide W."/>
            <person name="Bult C."/>
            <person name="Grimmond S.M."/>
            <person name="Teasdale R.D."/>
            <person name="Liu E.T."/>
            <person name="Brusic V."/>
            <person name="Quackenbush J."/>
            <person name="Wahlestedt C."/>
            <person name="Mattick J.S."/>
            <person name="Hume D.A."/>
            <person name="Kai C."/>
            <person name="Sasaki D."/>
            <person name="Tomaru Y."/>
            <person name="Fukuda S."/>
            <person name="Kanamori-Katayama M."/>
            <person name="Suzuki M."/>
            <person name="Aoki J."/>
            <person name="Arakawa T."/>
            <person name="Iida J."/>
            <person name="Imamura K."/>
            <person name="Itoh M."/>
            <person name="Kato T."/>
            <person name="Kawaji H."/>
            <person name="Kawagashira N."/>
            <person name="Kawashima T."/>
            <person name="Kojima M."/>
            <person name="Kondo S."/>
            <person name="Konno H."/>
            <person name="Nakano K."/>
            <person name="Ninomiya N."/>
            <person name="Nishio T."/>
            <person name="Okada M."/>
            <person name="Plessy C."/>
            <person name="Shibata K."/>
            <person name="Shiraki T."/>
            <person name="Suzuki S."/>
            <person name="Tagami M."/>
            <person name="Waki K."/>
            <person name="Watahiki A."/>
            <person name="Okamura-Oho Y."/>
            <person name="Suzuki H."/>
            <person name="Kawai J."/>
            <person name="Hayashizaki Y."/>
        </authorList>
    </citation>
    <scope>NUCLEOTIDE SEQUENCE [LARGE SCALE MRNA]</scope>
    <source>
        <strain>C57BL/6J</strain>
        <tissue>Cerebellum</tissue>
        <tissue>Retina</tissue>
        <tissue>Spinal cord</tissue>
    </source>
</reference>
<reference key="2">
    <citation type="journal article" date="2009" name="PLoS Biol.">
        <title>Lineage-specific biology revealed by a finished genome assembly of the mouse.</title>
        <authorList>
            <person name="Church D.M."/>
            <person name="Goodstadt L."/>
            <person name="Hillier L.W."/>
            <person name="Zody M.C."/>
            <person name="Goldstein S."/>
            <person name="She X."/>
            <person name="Bult C.J."/>
            <person name="Agarwala R."/>
            <person name="Cherry J.L."/>
            <person name="DiCuccio M."/>
            <person name="Hlavina W."/>
            <person name="Kapustin Y."/>
            <person name="Meric P."/>
            <person name="Maglott D."/>
            <person name="Birtle Z."/>
            <person name="Marques A.C."/>
            <person name="Graves T."/>
            <person name="Zhou S."/>
            <person name="Teague B."/>
            <person name="Potamousis K."/>
            <person name="Churas C."/>
            <person name="Place M."/>
            <person name="Herschleb J."/>
            <person name="Runnheim R."/>
            <person name="Forrest D."/>
            <person name="Amos-Landgraf J."/>
            <person name="Schwartz D.C."/>
            <person name="Cheng Z."/>
            <person name="Lindblad-Toh K."/>
            <person name="Eichler E.E."/>
            <person name="Ponting C.P."/>
        </authorList>
    </citation>
    <scope>NUCLEOTIDE SEQUENCE [LARGE SCALE GENOMIC DNA]</scope>
    <source>
        <strain>C57BL/6J</strain>
    </source>
</reference>
<reference key="3">
    <citation type="journal article" date="2004" name="Genome Res.">
        <title>The status, quality, and expansion of the NIH full-length cDNA project: the Mammalian Gene Collection (MGC).</title>
        <authorList>
            <consortium name="The MGC Project Team"/>
        </authorList>
    </citation>
    <scope>NUCLEOTIDE SEQUENCE [LARGE SCALE MRNA]</scope>
    <source>
        <strain>FVB/N</strain>
        <tissue>Eye</tissue>
        <tissue>Salivary gland</tissue>
    </source>
</reference>
<reference key="4">
    <citation type="journal article" date="2004" name="Mol. Cell. Proteomics">
        <title>Phosphoproteomic analysis of the developing mouse brain.</title>
        <authorList>
            <person name="Ballif B.A."/>
            <person name="Villen J."/>
            <person name="Beausoleil S.A."/>
            <person name="Schwartz D."/>
            <person name="Gygi S.P."/>
        </authorList>
    </citation>
    <scope>PHOSPHORYLATION [LARGE SCALE ANALYSIS] AT SER-173</scope>
    <scope>IDENTIFICATION BY MASS SPECTROMETRY [LARGE SCALE ANALYSIS]</scope>
    <source>
        <tissue>Embryonic brain</tissue>
    </source>
</reference>
<reference key="5">
    <citation type="journal article" date="2007" name="Mol. Cell. Proteomics">
        <title>Qualitative and quantitative analyses of protein phosphorylation in naive and stimulated mouse synaptosomal preparations.</title>
        <authorList>
            <person name="Munton R.P."/>
            <person name="Tweedie-Cullen R."/>
            <person name="Livingstone-Zatchej M."/>
            <person name="Weinandy F."/>
            <person name="Waidelich M."/>
            <person name="Longo D."/>
            <person name="Gehrig P."/>
            <person name="Potthast F."/>
            <person name="Rutishauser D."/>
            <person name="Gerrits B."/>
            <person name="Panse C."/>
            <person name="Schlapbach R."/>
            <person name="Mansuy I.M."/>
        </authorList>
    </citation>
    <scope>IDENTIFICATION BY MASS SPECTROMETRY [LARGE SCALE ANALYSIS]</scope>
    <source>
        <tissue>Brain cortex</tissue>
    </source>
</reference>
<reference key="6">
    <citation type="journal article" date="2010" name="Cell">
        <title>A tissue-specific atlas of mouse protein phosphorylation and expression.</title>
        <authorList>
            <person name="Huttlin E.L."/>
            <person name="Jedrychowski M.P."/>
            <person name="Elias J.E."/>
            <person name="Goswami T."/>
            <person name="Rad R."/>
            <person name="Beausoleil S.A."/>
            <person name="Villen J."/>
            <person name="Haas W."/>
            <person name="Sowa M.E."/>
            <person name="Gygi S.P."/>
        </authorList>
    </citation>
    <scope>PHOSPHORYLATION [LARGE SCALE ANALYSIS] AT SER-84; SER-108; SER-279 AND THR-283</scope>
    <scope>IDENTIFICATION BY MASS SPECTROMETRY [LARGE SCALE ANALYSIS]</scope>
    <source>
        <tissue>Brain</tissue>
        <tissue>Kidney</tissue>
        <tissue>Lung</tissue>
        <tissue>Spleen</tissue>
    </source>
</reference>
<sequence length="417" mass="45102">MASSKLREPVDEVFDLDLAVPETTRLDSSLHKARAQLLAKGRRHRPSRSRLRDSASSAEDGEGSDGPGGKVTDGCGSPLHRLRSPLHSGPGSPASGSFCLEPPGLRRSLDEDEPPPSPLARYRPLHNAASHEGLAATSGSPPRSAPSSDSSPSFVRRYPRAEPHSEDDSRDASPPEPASPTIGLDKKTRRKFLDLGVTLRRASTSRSRKEKGSNRLSMGSRESVEGSGRTGSSPFLPFSWFTDSGKGSASSGSTTSPTCSPKHEGFSPKKSASQESTLSDDSTPPSSSPKIPGGPRQETKCSYPYHTLSQSSDEFLDESLPAVQHWTSQQVGQWLHSLNLEQYAAEFAARQVDGPQLLQLDGSKLKSLGLSNSHDRALVKRKLKELAAAAEKERKAQEKTAKQREKLRRRENDAKKS</sequence>